<proteinExistence type="evidence at transcript level"/>
<feature type="signal peptide" evidence="1">
    <location>
        <begin position="1"/>
        <end position="28"/>
    </location>
</feature>
<feature type="chain" id="PRO_0000252100" description="Expansin-like A3">
    <location>
        <begin position="29"/>
        <end position="276"/>
    </location>
</feature>
<feature type="domain" description="Expansin-like EG45" evidence="3">
    <location>
        <begin position="52"/>
        <end position="158"/>
    </location>
</feature>
<feature type="domain" description="Expansin-like CBD" evidence="2">
    <location>
        <begin position="172"/>
        <end position="255"/>
    </location>
</feature>
<feature type="glycosylation site" description="N-linked (GlcNAc...) asparagine" evidence="1">
    <location>
        <position position="115"/>
    </location>
</feature>
<feature type="glycosylation site" description="N-linked (GlcNAc...) asparagine" evidence="1">
    <location>
        <position position="159"/>
    </location>
</feature>
<comment type="subcellular location">
    <subcellularLocation>
        <location evidence="5">Secreted</location>
    </subcellularLocation>
</comment>
<comment type="developmental stage">
    <text evidence="4">Expressed in the growing regions of roots, coleoptiles, internodes, and leaves.</text>
</comment>
<comment type="induction">
    <text evidence="4">By gibberellin (GA3).</text>
</comment>
<comment type="similarity">
    <text evidence="5">Belongs to the expansin family. Expansin-like A subfamily.</text>
</comment>
<comment type="online information" name="EXPANSIN homepage">
    <link uri="https://www.dept.psu.edu/biology/groups/expansins/index.htm"/>
</comment>
<accession>Q8H274</accession>
<accession>Q0D6I8</accession>
<sequence length="276" mass="29726">MAVLLSILSSSFLLLLAASSSSTPRASACERCVRNGKAAYSPSLSPLPPGGGGGCGYGAMAMEMELNGGFLAAGGPRQHRGGLGCGRCFQMRCRNAEVCSNAGVRVVLTDFHRSNSTDFLLGGPAFAGLAKPGMAHKLKKLDALSVEYRRIPCDYKDKNLSILVEEQSKRPNNLVIKFLYQGGQTDILAVDVAQVGSSDWRFMTRVYGPVWSIDRAPNGPLQFRAVVTGGYDGKWVWADREVLPANWQPGQVYDTGARIADVARESCLDCATLDWK</sequence>
<gene>
    <name type="primary">EXLA3</name>
    <name type="synonym">EXPL3</name>
    <name type="ordered locus">Os07g0475400</name>
    <name type="ordered locus">LOC_Os07g29290</name>
    <name evidence="6" type="ORF">OsJ_24214</name>
    <name type="ORF">P0571D04.118</name>
</gene>
<organism>
    <name type="scientific">Oryza sativa subsp. japonica</name>
    <name type="common">Rice</name>
    <dbReference type="NCBI Taxonomy" id="39947"/>
    <lineage>
        <taxon>Eukaryota</taxon>
        <taxon>Viridiplantae</taxon>
        <taxon>Streptophyta</taxon>
        <taxon>Embryophyta</taxon>
        <taxon>Tracheophyta</taxon>
        <taxon>Spermatophyta</taxon>
        <taxon>Magnoliopsida</taxon>
        <taxon>Liliopsida</taxon>
        <taxon>Poales</taxon>
        <taxon>Poaceae</taxon>
        <taxon>BOP clade</taxon>
        <taxon>Oryzoideae</taxon>
        <taxon>Oryzeae</taxon>
        <taxon>Oryzinae</taxon>
        <taxon>Oryza</taxon>
        <taxon>Oryza sativa</taxon>
    </lineage>
</organism>
<dbReference type="EMBL" id="AY100694">
    <property type="protein sequence ID" value="AAM52410.1"/>
    <property type="molecule type" value="mRNA"/>
</dbReference>
<dbReference type="EMBL" id="AP004315">
    <property type="protein sequence ID" value="BAC65927.1"/>
    <property type="molecule type" value="Genomic_DNA"/>
</dbReference>
<dbReference type="EMBL" id="AP008213">
    <property type="protein sequence ID" value="BAF21535.1"/>
    <property type="molecule type" value="Genomic_DNA"/>
</dbReference>
<dbReference type="EMBL" id="AP014963">
    <property type="protein sequence ID" value="BAT01445.1"/>
    <property type="molecule type" value="Genomic_DNA"/>
</dbReference>
<dbReference type="EMBL" id="CM000144">
    <property type="protein sequence ID" value="EAZ39777.1"/>
    <property type="molecule type" value="Genomic_DNA"/>
</dbReference>
<dbReference type="RefSeq" id="XP_015645083.1">
    <property type="nucleotide sequence ID" value="XM_015789597.1"/>
</dbReference>
<dbReference type="SMR" id="Q8H274"/>
<dbReference type="STRING" id="39947.Q8H274"/>
<dbReference type="GlyCosmos" id="Q8H274">
    <property type="glycosylation" value="2 sites, No reported glycans"/>
</dbReference>
<dbReference type="PaxDb" id="39947-Q8H274"/>
<dbReference type="EnsemblPlants" id="Os07t0475400-01">
    <property type="protein sequence ID" value="Os07t0475400-01"/>
    <property type="gene ID" value="Os07g0475400"/>
</dbReference>
<dbReference type="Gramene" id="Os07t0475400-01">
    <property type="protein sequence ID" value="Os07t0475400-01"/>
    <property type="gene ID" value="Os07g0475400"/>
</dbReference>
<dbReference type="KEGG" id="dosa:Os07g0475400"/>
<dbReference type="eggNOG" id="ENOG502QSGZ">
    <property type="taxonomic scope" value="Eukaryota"/>
</dbReference>
<dbReference type="HOGENOM" id="CLU_027462_3_1_1"/>
<dbReference type="InParanoid" id="Q8H274"/>
<dbReference type="OMA" id="MAMEING"/>
<dbReference type="OrthoDB" id="623266at2759"/>
<dbReference type="Proteomes" id="UP000000763">
    <property type="component" value="Chromosome 7"/>
</dbReference>
<dbReference type="Proteomes" id="UP000007752">
    <property type="component" value="Chromosome 7"/>
</dbReference>
<dbReference type="Proteomes" id="UP000059680">
    <property type="component" value="Chromosome 7"/>
</dbReference>
<dbReference type="GO" id="GO:0005576">
    <property type="term" value="C:extracellular region"/>
    <property type="evidence" value="ECO:0007669"/>
    <property type="project" value="UniProtKB-SubCell"/>
</dbReference>
<dbReference type="GO" id="GO:0009828">
    <property type="term" value="P:plant-type cell wall loosening"/>
    <property type="evidence" value="ECO:0000250"/>
    <property type="project" value="UniProtKB"/>
</dbReference>
<dbReference type="Gene3D" id="2.60.40.760">
    <property type="entry name" value="Expansin, cellulose-binding-like domain"/>
    <property type="match status" value="1"/>
</dbReference>
<dbReference type="Gene3D" id="2.40.40.10">
    <property type="entry name" value="RlpA-like domain"/>
    <property type="match status" value="1"/>
</dbReference>
<dbReference type="InterPro" id="IPR007118">
    <property type="entry name" value="Expan_Lol_pI"/>
</dbReference>
<dbReference type="InterPro" id="IPR007112">
    <property type="entry name" value="Expansin/allergen_DPBB_dom"/>
</dbReference>
<dbReference type="InterPro" id="IPR007117">
    <property type="entry name" value="Expansin_CBD"/>
</dbReference>
<dbReference type="InterPro" id="IPR036749">
    <property type="entry name" value="Expansin_CBD_sf"/>
</dbReference>
<dbReference type="InterPro" id="IPR036908">
    <property type="entry name" value="RlpA-like_sf"/>
</dbReference>
<dbReference type="PANTHER" id="PTHR31692">
    <property type="entry name" value="EXPANSIN-B3"/>
    <property type="match status" value="1"/>
</dbReference>
<dbReference type="PANTHER" id="PTHR31692:SF67">
    <property type="entry name" value="EXPANSIN-LIKE A3"/>
    <property type="match status" value="1"/>
</dbReference>
<dbReference type="Pfam" id="PF01357">
    <property type="entry name" value="Expansin_C"/>
    <property type="match status" value="1"/>
</dbReference>
<dbReference type="PRINTS" id="PR01225">
    <property type="entry name" value="EXPANSNFAMLY"/>
</dbReference>
<dbReference type="SUPFAM" id="SSF50685">
    <property type="entry name" value="Barwin-like endoglucanases"/>
    <property type="match status" value="1"/>
</dbReference>
<dbReference type="SUPFAM" id="SSF49590">
    <property type="entry name" value="PHL pollen allergen"/>
    <property type="match status" value="1"/>
</dbReference>
<dbReference type="PROSITE" id="PS50843">
    <property type="entry name" value="EXPANSIN_CBD"/>
    <property type="match status" value="1"/>
</dbReference>
<dbReference type="PROSITE" id="PS50842">
    <property type="entry name" value="EXPANSIN_EG45"/>
    <property type="match status" value="1"/>
</dbReference>
<reference key="1">
    <citation type="journal article" date="2002" name="Plant Physiol.">
        <title>Expression of alpha-expansin and expansin-like genes in deepwater rice.</title>
        <authorList>
            <person name="Lee Y."/>
            <person name="Kende H."/>
        </authorList>
    </citation>
    <scope>NUCLEOTIDE SEQUENCE [MRNA]</scope>
    <scope>DEVELOPMENTAL STAGE</scope>
    <scope>INDUCTION</scope>
</reference>
<reference key="2">
    <citation type="journal article" date="2005" name="Nature">
        <title>The map-based sequence of the rice genome.</title>
        <authorList>
            <consortium name="International rice genome sequencing project (IRGSP)"/>
        </authorList>
    </citation>
    <scope>NUCLEOTIDE SEQUENCE [LARGE SCALE GENOMIC DNA]</scope>
    <source>
        <strain>cv. Nipponbare</strain>
    </source>
</reference>
<reference key="3">
    <citation type="journal article" date="2008" name="Nucleic Acids Res.">
        <title>The rice annotation project database (RAP-DB): 2008 update.</title>
        <authorList>
            <consortium name="The rice annotation project (RAP)"/>
        </authorList>
    </citation>
    <scope>GENOME REANNOTATION</scope>
    <source>
        <strain>cv. Nipponbare</strain>
    </source>
</reference>
<reference key="4">
    <citation type="journal article" date="2013" name="Rice">
        <title>Improvement of the Oryza sativa Nipponbare reference genome using next generation sequence and optical map data.</title>
        <authorList>
            <person name="Kawahara Y."/>
            <person name="de la Bastide M."/>
            <person name="Hamilton J.P."/>
            <person name="Kanamori H."/>
            <person name="McCombie W.R."/>
            <person name="Ouyang S."/>
            <person name="Schwartz D.C."/>
            <person name="Tanaka T."/>
            <person name="Wu J."/>
            <person name="Zhou S."/>
            <person name="Childs K.L."/>
            <person name="Davidson R.M."/>
            <person name="Lin H."/>
            <person name="Quesada-Ocampo L."/>
            <person name="Vaillancourt B."/>
            <person name="Sakai H."/>
            <person name="Lee S.S."/>
            <person name="Kim J."/>
            <person name="Numa H."/>
            <person name="Itoh T."/>
            <person name="Buell C.R."/>
            <person name="Matsumoto T."/>
        </authorList>
    </citation>
    <scope>GENOME REANNOTATION</scope>
    <source>
        <strain>cv. Nipponbare</strain>
    </source>
</reference>
<reference key="5">
    <citation type="journal article" date="2005" name="PLoS Biol.">
        <title>The genomes of Oryza sativa: a history of duplications.</title>
        <authorList>
            <person name="Yu J."/>
            <person name="Wang J."/>
            <person name="Lin W."/>
            <person name="Li S."/>
            <person name="Li H."/>
            <person name="Zhou J."/>
            <person name="Ni P."/>
            <person name="Dong W."/>
            <person name="Hu S."/>
            <person name="Zeng C."/>
            <person name="Zhang J."/>
            <person name="Zhang Y."/>
            <person name="Li R."/>
            <person name="Xu Z."/>
            <person name="Li S."/>
            <person name="Li X."/>
            <person name="Zheng H."/>
            <person name="Cong L."/>
            <person name="Lin L."/>
            <person name="Yin J."/>
            <person name="Geng J."/>
            <person name="Li G."/>
            <person name="Shi J."/>
            <person name="Liu J."/>
            <person name="Lv H."/>
            <person name="Li J."/>
            <person name="Wang J."/>
            <person name="Deng Y."/>
            <person name="Ran L."/>
            <person name="Shi X."/>
            <person name="Wang X."/>
            <person name="Wu Q."/>
            <person name="Li C."/>
            <person name="Ren X."/>
            <person name="Wang J."/>
            <person name="Wang X."/>
            <person name="Li D."/>
            <person name="Liu D."/>
            <person name="Zhang X."/>
            <person name="Ji Z."/>
            <person name="Zhao W."/>
            <person name="Sun Y."/>
            <person name="Zhang Z."/>
            <person name="Bao J."/>
            <person name="Han Y."/>
            <person name="Dong L."/>
            <person name="Ji J."/>
            <person name="Chen P."/>
            <person name="Wu S."/>
            <person name="Liu J."/>
            <person name="Xiao Y."/>
            <person name="Bu D."/>
            <person name="Tan J."/>
            <person name="Yang L."/>
            <person name="Ye C."/>
            <person name="Zhang J."/>
            <person name="Xu J."/>
            <person name="Zhou Y."/>
            <person name="Yu Y."/>
            <person name="Zhang B."/>
            <person name="Zhuang S."/>
            <person name="Wei H."/>
            <person name="Liu B."/>
            <person name="Lei M."/>
            <person name="Yu H."/>
            <person name="Li Y."/>
            <person name="Xu H."/>
            <person name="Wei S."/>
            <person name="He X."/>
            <person name="Fang L."/>
            <person name="Zhang Z."/>
            <person name="Zhang Y."/>
            <person name="Huang X."/>
            <person name="Su Z."/>
            <person name="Tong W."/>
            <person name="Li J."/>
            <person name="Tong Z."/>
            <person name="Li S."/>
            <person name="Ye J."/>
            <person name="Wang L."/>
            <person name="Fang L."/>
            <person name="Lei T."/>
            <person name="Chen C.-S."/>
            <person name="Chen H.-C."/>
            <person name="Xu Z."/>
            <person name="Li H."/>
            <person name="Huang H."/>
            <person name="Zhang F."/>
            <person name="Xu H."/>
            <person name="Li N."/>
            <person name="Zhao C."/>
            <person name="Li S."/>
            <person name="Dong L."/>
            <person name="Huang Y."/>
            <person name="Li L."/>
            <person name="Xi Y."/>
            <person name="Qi Q."/>
            <person name="Li W."/>
            <person name="Zhang B."/>
            <person name="Hu W."/>
            <person name="Zhang Y."/>
            <person name="Tian X."/>
            <person name="Jiao Y."/>
            <person name="Liang X."/>
            <person name="Jin J."/>
            <person name="Gao L."/>
            <person name="Zheng W."/>
            <person name="Hao B."/>
            <person name="Liu S.-M."/>
            <person name="Wang W."/>
            <person name="Yuan L."/>
            <person name="Cao M."/>
            <person name="McDermott J."/>
            <person name="Samudrala R."/>
            <person name="Wang J."/>
            <person name="Wong G.K.-S."/>
            <person name="Yang H."/>
        </authorList>
    </citation>
    <scope>NUCLEOTIDE SEQUENCE [LARGE SCALE GENOMIC DNA]</scope>
    <source>
        <strain>cv. Nipponbare</strain>
    </source>
</reference>
<reference key="6">
    <citation type="journal article" date="2004" name="Plant Mol. Biol.">
        <title>Nomenclature for members of the expansin superfamily of genes and proteins.</title>
        <authorList>
            <person name="Kende H."/>
            <person name="Bradford K.J."/>
            <person name="Brummell D.A."/>
            <person name="Cho H.-T."/>
            <person name="Cosgrove D.J."/>
            <person name="Fleming A.J."/>
            <person name="Gehring C."/>
            <person name="Lee Y."/>
            <person name="McQueen-Mason S.J."/>
            <person name="Rose J.K.C."/>
            <person name="Voesenek L.A.C."/>
        </authorList>
    </citation>
    <scope>NOMENCLATURE</scope>
</reference>
<evidence type="ECO:0000255" key="1"/>
<evidence type="ECO:0000255" key="2">
    <source>
        <dbReference type="PROSITE-ProRule" id="PRU00078"/>
    </source>
</evidence>
<evidence type="ECO:0000255" key="3">
    <source>
        <dbReference type="PROSITE-ProRule" id="PRU00079"/>
    </source>
</evidence>
<evidence type="ECO:0000269" key="4">
    <source>
    </source>
</evidence>
<evidence type="ECO:0000305" key="5"/>
<evidence type="ECO:0000312" key="6">
    <source>
        <dbReference type="EMBL" id="EAZ39777.1"/>
    </source>
</evidence>
<name>EXLA3_ORYSJ</name>
<protein>
    <recommendedName>
        <fullName>Expansin-like A3</fullName>
    </recommendedName>
    <alternativeName>
        <fullName>OsEXLA3</fullName>
    </alternativeName>
    <alternativeName>
        <fullName>OsEXPL3</fullName>
    </alternativeName>
    <alternativeName>
        <fullName>OsaEXPb2.3</fullName>
    </alternativeName>
</protein>
<keyword id="KW-0325">Glycoprotein</keyword>
<keyword id="KW-1185">Reference proteome</keyword>
<keyword id="KW-0964">Secreted</keyword>
<keyword id="KW-0732">Signal</keyword>